<proteinExistence type="inferred from homology"/>
<gene>
    <name evidence="2" type="primary">tuf</name>
    <name type="ordered locus">MMOB2240</name>
</gene>
<dbReference type="EC" id="3.6.5.3" evidence="2"/>
<dbReference type="EMBL" id="AE017308">
    <property type="protein sequence ID" value="AAT27710.1"/>
    <property type="molecule type" value="Genomic_DNA"/>
</dbReference>
<dbReference type="RefSeq" id="WP_011264744.1">
    <property type="nucleotide sequence ID" value="NC_006908.1"/>
</dbReference>
<dbReference type="SMR" id="Q6KI66"/>
<dbReference type="STRING" id="267748.MMOB2240"/>
<dbReference type="KEGG" id="mmo:MMOB2240"/>
<dbReference type="eggNOG" id="COG0050">
    <property type="taxonomic scope" value="Bacteria"/>
</dbReference>
<dbReference type="HOGENOM" id="CLU_007265_0_1_14"/>
<dbReference type="OrthoDB" id="9804504at2"/>
<dbReference type="Proteomes" id="UP000009072">
    <property type="component" value="Chromosome"/>
</dbReference>
<dbReference type="GO" id="GO:0005829">
    <property type="term" value="C:cytosol"/>
    <property type="evidence" value="ECO:0007669"/>
    <property type="project" value="TreeGrafter"/>
</dbReference>
<dbReference type="GO" id="GO:0005525">
    <property type="term" value="F:GTP binding"/>
    <property type="evidence" value="ECO:0007669"/>
    <property type="project" value="UniProtKB-UniRule"/>
</dbReference>
<dbReference type="GO" id="GO:0003924">
    <property type="term" value="F:GTPase activity"/>
    <property type="evidence" value="ECO:0007669"/>
    <property type="project" value="InterPro"/>
</dbReference>
<dbReference type="GO" id="GO:0003746">
    <property type="term" value="F:translation elongation factor activity"/>
    <property type="evidence" value="ECO:0007669"/>
    <property type="project" value="UniProtKB-UniRule"/>
</dbReference>
<dbReference type="CDD" id="cd01884">
    <property type="entry name" value="EF_Tu"/>
    <property type="match status" value="1"/>
</dbReference>
<dbReference type="CDD" id="cd03697">
    <property type="entry name" value="EFTU_II"/>
    <property type="match status" value="1"/>
</dbReference>
<dbReference type="CDD" id="cd03707">
    <property type="entry name" value="EFTU_III"/>
    <property type="match status" value="1"/>
</dbReference>
<dbReference type="FunFam" id="2.40.30.10:FF:000001">
    <property type="entry name" value="Elongation factor Tu"/>
    <property type="match status" value="1"/>
</dbReference>
<dbReference type="FunFam" id="3.40.50.300:FF:000003">
    <property type="entry name" value="Elongation factor Tu"/>
    <property type="match status" value="1"/>
</dbReference>
<dbReference type="Gene3D" id="3.40.50.300">
    <property type="entry name" value="P-loop containing nucleotide triphosphate hydrolases"/>
    <property type="match status" value="1"/>
</dbReference>
<dbReference type="Gene3D" id="2.40.30.10">
    <property type="entry name" value="Translation factors"/>
    <property type="match status" value="2"/>
</dbReference>
<dbReference type="HAMAP" id="MF_00118_B">
    <property type="entry name" value="EF_Tu_B"/>
    <property type="match status" value="1"/>
</dbReference>
<dbReference type="InterPro" id="IPR041709">
    <property type="entry name" value="EF-Tu_GTP-bd"/>
</dbReference>
<dbReference type="InterPro" id="IPR050055">
    <property type="entry name" value="EF-Tu_GTPase"/>
</dbReference>
<dbReference type="InterPro" id="IPR004161">
    <property type="entry name" value="EFTu-like_2"/>
</dbReference>
<dbReference type="InterPro" id="IPR033720">
    <property type="entry name" value="EFTU_2"/>
</dbReference>
<dbReference type="InterPro" id="IPR031157">
    <property type="entry name" value="G_TR_CS"/>
</dbReference>
<dbReference type="InterPro" id="IPR027417">
    <property type="entry name" value="P-loop_NTPase"/>
</dbReference>
<dbReference type="InterPro" id="IPR005225">
    <property type="entry name" value="Small_GTP-bd"/>
</dbReference>
<dbReference type="InterPro" id="IPR000795">
    <property type="entry name" value="T_Tr_GTP-bd_dom"/>
</dbReference>
<dbReference type="InterPro" id="IPR009000">
    <property type="entry name" value="Transl_B-barrel_sf"/>
</dbReference>
<dbReference type="InterPro" id="IPR009001">
    <property type="entry name" value="Transl_elong_EF1A/Init_IF2_C"/>
</dbReference>
<dbReference type="InterPro" id="IPR004541">
    <property type="entry name" value="Transl_elong_EFTu/EF1A_bac/org"/>
</dbReference>
<dbReference type="InterPro" id="IPR004160">
    <property type="entry name" value="Transl_elong_EFTu/EF1A_C"/>
</dbReference>
<dbReference type="NCBIfam" id="TIGR00485">
    <property type="entry name" value="EF-Tu"/>
    <property type="match status" value="1"/>
</dbReference>
<dbReference type="NCBIfam" id="NF000766">
    <property type="entry name" value="PRK00049.1"/>
    <property type="match status" value="1"/>
</dbReference>
<dbReference type="NCBIfam" id="NF009372">
    <property type="entry name" value="PRK12735.1"/>
    <property type="match status" value="1"/>
</dbReference>
<dbReference type="NCBIfam" id="NF009373">
    <property type="entry name" value="PRK12736.1"/>
    <property type="match status" value="1"/>
</dbReference>
<dbReference type="NCBIfam" id="TIGR00231">
    <property type="entry name" value="small_GTP"/>
    <property type="match status" value="1"/>
</dbReference>
<dbReference type="PANTHER" id="PTHR43721:SF22">
    <property type="entry name" value="ELONGATION FACTOR TU, MITOCHONDRIAL"/>
    <property type="match status" value="1"/>
</dbReference>
<dbReference type="PANTHER" id="PTHR43721">
    <property type="entry name" value="ELONGATION FACTOR TU-RELATED"/>
    <property type="match status" value="1"/>
</dbReference>
<dbReference type="Pfam" id="PF00009">
    <property type="entry name" value="GTP_EFTU"/>
    <property type="match status" value="1"/>
</dbReference>
<dbReference type="Pfam" id="PF03144">
    <property type="entry name" value="GTP_EFTU_D2"/>
    <property type="match status" value="1"/>
</dbReference>
<dbReference type="Pfam" id="PF03143">
    <property type="entry name" value="GTP_EFTU_D3"/>
    <property type="match status" value="1"/>
</dbReference>
<dbReference type="PRINTS" id="PR00315">
    <property type="entry name" value="ELONGATNFCT"/>
</dbReference>
<dbReference type="SUPFAM" id="SSF50465">
    <property type="entry name" value="EF-Tu/eEF-1alpha/eIF2-gamma C-terminal domain"/>
    <property type="match status" value="1"/>
</dbReference>
<dbReference type="SUPFAM" id="SSF52540">
    <property type="entry name" value="P-loop containing nucleoside triphosphate hydrolases"/>
    <property type="match status" value="1"/>
</dbReference>
<dbReference type="SUPFAM" id="SSF50447">
    <property type="entry name" value="Translation proteins"/>
    <property type="match status" value="1"/>
</dbReference>
<dbReference type="PROSITE" id="PS00301">
    <property type="entry name" value="G_TR_1"/>
    <property type="match status" value="1"/>
</dbReference>
<dbReference type="PROSITE" id="PS51722">
    <property type="entry name" value="G_TR_2"/>
    <property type="match status" value="1"/>
</dbReference>
<evidence type="ECO:0000250" key="1"/>
<evidence type="ECO:0000255" key="2">
    <source>
        <dbReference type="HAMAP-Rule" id="MF_00118"/>
    </source>
</evidence>
<name>EFTU_MYCM1</name>
<keyword id="KW-0963">Cytoplasm</keyword>
<keyword id="KW-0251">Elongation factor</keyword>
<keyword id="KW-0342">GTP-binding</keyword>
<keyword id="KW-0378">Hydrolase</keyword>
<keyword id="KW-0460">Magnesium</keyword>
<keyword id="KW-0479">Metal-binding</keyword>
<keyword id="KW-0547">Nucleotide-binding</keyword>
<keyword id="KW-0648">Protein biosynthesis</keyword>
<keyword id="KW-1185">Reference proteome</keyword>
<organism>
    <name type="scientific">Mycoplasma mobile (strain ATCC 43663 / 163K / NCTC 11711)</name>
    <name type="common">Mesomycoplasma mobile</name>
    <dbReference type="NCBI Taxonomy" id="267748"/>
    <lineage>
        <taxon>Bacteria</taxon>
        <taxon>Bacillati</taxon>
        <taxon>Mycoplasmatota</taxon>
        <taxon>Mycoplasmoidales</taxon>
        <taxon>Metamycoplasmataceae</taxon>
        <taxon>Mesomycoplasma</taxon>
    </lineage>
</organism>
<protein>
    <recommendedName>
        <fullName evidence="2">Elongation factor Tu</fullName>
        <shortName evidence="2">EF-Tu</shortName>
        <ecNumber evidence="2">3.6.5.3</ecNumber>
    </recommendedName>
</protein>
<reference key="1">
    <citation type="journal article" date="2004" name="Genome Res.">
        <title>The complete genome and proteome of Mycoplasma mobile.</title>
        <authorList>
            <person name="Jaffe J.D."/>
            <person name="Stange-Thomann N."/>
            <person name="Smith C."/>
            <person name="DeCaprio D."/>
            <person name="Fisher S."/>
            <person name="Butler J."/>
            <person name="Calvo S."/>
            <person name="Elkins T."/>
            <person name="FitzGerald M.G."/>
            <person name="Hafez N."/>
            <person name="Kodira C.D."/>
            <person name="Major J."/>
            <person name="Wang S."/>
            <person name="Wilkinson J."/>
            <person name="Nicol R."/>
            <person name="Nusbaum C."/>
            <person name="Birren B."/>
            <person name="Berg H.C."/>
            <person name="Church G.M."/>
        </authorList>
    </citation>
    <scope>NUCLEOTIDE SEQUENCE [LARGE SCALE GENOMIC DNA]</scope>
    <source>
        <strain>ATCC 43663 / NCTC 11711 / 163 K</strain>
    </source>
</reference>
<comment type="function">
    <text evidence="2">GTP hydrolase that promotes the GTP-dependent binding of aminoacyl-tRNA to the A-site of ribosomes during protein biosynthesis.</text>
</comment>
<comment type="catalytic activity">
    <reaction evidence="2">
        <text>GTP + H2O = GDP + phosphate + H(+)</text>
        <dbReference type="Rhea" id="RHEA:19669"/>
        <dbReference type="ChEBI" id="CHEBI:15377"/>
        <dbReference type="ChEBI" id="CHEBI:15378"/>
        <dbReference type="ChEBI" id="CHEBI:37565"/>
        <dbReference type="ChEBI" id="CHEBI:43474"/>
        <dbReference type="ChEBI" id="CHEBI:58189"/>
        <dbReference type="EC" id="3.6.5.3"/>
    </reaction>
    <physiologicalReaction direction="left-to-right" evidence="2">
        <dbReference type="Rhea" id="RHEA:19670"/>
    </physiologicalReaction>
</comment>
<comment type="subunit">
    <text evidence="2">Monomer.</text>
</comment>
<comment type="subcellular location">
    <subcellularLocation>
        <location evidence="2">Cytoplasm</location>
    </subcellularLocation>
</comment>
<comment type="similarity">
    <text evidence="2">Belongs to the TRAFAC class translation factor GTPase superfamily. Classic translation factor GTPase family. EF-Tu/EF-1A subfamily.</text>
</comment>
<feature type="chain" id="PRO_1000015699" description="Elongation factor Tu">
    <location>
        <begin position="1"/>
        <end position="400"/>
    </location>
</feature>
<feature type="domain" description="tr-type G">
    <location>
        <begin position="10"/>
        <end position="209"/>
    </location>
</feature>
<feature type="region of interest" description="G1" evidence="1">
    <location>
        <begin position="19"/>
        <end position="26"/>
    </location>
</feature>
<feature type="region of interest" description="G2" evidence="1">
    <location>
        <begin position="61"/>
        <end position="65"/>
    </location>
</feature>
<feature type="region of interest" description="G3" evidence="1">
    <location>
        <begin position="82"/>
        <end position="85"/>
    </location>
</feature>
<feature type="region of interest" description="G4" evidence="1">
    <location>
        <begin position="137"/>
        <end position="140"/>
    </location>
</feature>
<feature type="region of interest" description="G5" evidence="1">
    <location>
        <begin position="179"/>
        <end position="181"/>
    </location>
</feature>
<feature type="binding site" evidence="2">
    <location>
        <begin position="19"/>
        <end position="26"/>
    </location>
    <ligand>
        <name>GTP</name>
        <dbReference type="ChEBI" id="CHEBI:37565"/>
    </ligand>
</feature>
<feature type="binding site" evidence="2">
    <location>
        <position position="26"/>
    </location>
    <ligand>
        <name>Mg(2+)</name>
        <dbReference type="ChEBI" id="CHEBI:18420"/>
    </ligand>
</feature>
<feature type="binding site" evidence="2">
    <location>
        <begin position="82"/>
        <end position="86"/>
    </location>
    <ligand>
        <name>GTP</name>
        <dbReference type="ChEBI" id="CHEBI:37565"/>
    </ligand>
</feature>
<feature type="binding site" evidence="2">
    <location>
        <begin position="137"/>
        <end position="140"/>
    </location>
    <ligand>
        <name>GTP</name>
        <dbReference type="ChEBI" id="CHEBI:37565"/>
    </ligand>
</feature>
<sequence>MAKIDFDRSKEHVNIGTIGHVDHGKTTLTAAIATVLAKHVEGNEARDYGSIDNAPEERERGITINTSHIEYNTEKRHYAHVDCPGHADYVKNMITGAAQMDGAILVVAATDGPMPQTREHILLSKQVGVPKMVVFLNKVDLLGSGSEAEEMADLVEFEIRDLLSQYEFDGENTPVVRGSALKALNGEKAWEDKVMELMSQVDNWIDAPLREVDKPFLMAVEDVFTITGRGTVATGKVERGELKINEEVDIVGYTEKPKRTTVTGIEMFRKNLKTALAGDNAGLLLRGINREQIERGQVLAKPGTIVPHTKFKAAIYALKKEEGGRHTPFFKNYKPQFYFRTTDVTGGIELPNNIEMVTPGDNVDLIVDLISPIAVEVGTKFSIREGGRTVGAGSVTEIVK</sequence>
<accession>Q6KI66</accession>